<protein>
    <recommendedName>
        <fullName evidence="1">UPF0298 protein spr0657</fullName>
    </recommendedName>
</protein>
<feature type="chain" id="PRO_0000074677" description="UPF0298 protein spr0657">
    <location>
        <begin position="1"/>
        <end position="82"/>
    </location>
</feature>
<evidence type="ECO:0000255" key="1">
    <source>
        <dbReference type="HAMAP-Rule" id="MF_01126"/>
    </source>
</evidence>
<proteinExistence type="inferred from homology"/>
<reference key="1">
    <citation type="journal article" date="2001" name="J. Bacteriol.">
        <title>Genome of the bacterium Streptococcus pneumoniae strain R6.</title>
        <authorList>
            <person name="Hoskins J."/>
            <person name="Alborn W.E. Jr."/>
            <person name="Arnold J."/>
            <person name="Blaszczak L.C."/>
            <person name="Burgett S."/>
            <person name="DeHoff B.S."/>
            <person name="Estrem S.T."/>
            <person name="Fritz L."/>
            <person name="Fu D.-J."/>
            <person name="Fuller W."/>
            <person name="Geringer C."/>
            <person name="Gilmour R."/>
            <person name="Glass J.S."/>
            <person name="Khoja H."/>
            <person name="Kraft A.R."/>
            <person name="Lagace R.E."/>
            <person name="LeBlanc D.J."/>
            <person name="Lee L.N."/>
            <person name="Lefkowitz E.J."/>
            <person name="Lu J."/>
            <person name="Matsushima P."/>
            <person name="McAhren S.M."/>
            <person name="McHenney M."/>
            <person name="McLeaster K."/>
            <person name="Mundy C.W."/>
            <person name="Nicas T.I."/>
            <person name="Norris F.H."/>
            <person name="O'Gara M."/>
            <person name="Peery R.B."/>
            <person name="Robertson G.T."/>
            <person name="Rockey P."/>
            <person name="Sun P.-M."/>
            <person name="Winkler M.E."/>
            <person name="Yang Y."/>
            <person name="Young-Bellido M."/>
            <person name="Zhao G."/>
            <person name="Zook C.A."/>
            <person name="Baltz R.H."/>
            <person name="Jaskunas S.R."/>
            <person name="Rosteck P.R. Jr."/>
            <person name="Skatrud P.L."/>
            <person name="Glass J.I."/>
        </authorList>
    </citation>
    <scope>NUCLEOTIDE SEQUENCE [LARGE SCALE GENOMIC DNA]</scope>
    <source>
        <strain>ATCC BAA-255 / R6</strain>
    </source>
</reference>
<name>Y657_STRR6</name>
<comment type="subcellular location">
    <subcellularLocation>
        <location evidence="1">Cytoplasm</location>
    </subcellularLocation>
</comment>
<comment type="similarity">
    <text evidence="1">Belongs to the UPF0298 family.</text>
</comment>
<dbReference type="EMBL" id="AE007317">
    <property type="protein sequence ID" value="AAK99461.1"/>
    <property type="molecule type" value="Genomic_DNA"/>
</dbReference>
<dbReference type="PIR" id="A97954">
    <property type="entry name" value="A97954"/>
</dbReference>
<dbReference type="RefSeq" id="NP_358251.1">
    <property type="nucleotide sequence ID" value="NC_003098.1"/>
</dbReference>
<dbReference type="RefSeq" id="WP_000462126.1">
    <property type="nucleotide sequence ID" value="NC_003098.1"/>
</dbReference>
<dbReference type="SMR" id="Q8DQI2"/>
<dbReference type="STRING" id="171101.spr0657"/>
<dbReference type="KEGG" id="spr:spr0657"/>
<dbReference type="PATRIC" id="fig|171101.6.peg.729"/>
<dbReference type="eggNOG" id="COG4471">
    <property type="taxonomic scope" value="Bacteria"/>
</dbReference>
<dbReference type="HOGENOM" id="CLU_159890_1_0_9"/>
<dbReference type="Proteomes" id="UP000000586">
    <property type="component" value="Chromosome"/>
</dbReference>
<dbReference type="GO" id="GO:0005737">
    <property type="term" value="C:cytoplasm"/>
    <property type="evidence" value="ECO:0007669"/>
    <property type="project" value="UniProtKB-SubCell"/>
</dbReference>
<dbReference type="HAMAP" id="MF_01126">
    <property type="entry name" value="UPF0298"/>
    <property type="match status" value="1"/>
</dbReference>
<dbReference type="InterPro" id="IPR016979">
    <property type="entry name" value="DUF2129"/>
</dbReference>
<dbReference type="NCBIfam" id="NF002631">
    <property type="entry name" value="PRK02302.1"/>
    <property type="match status" value="1"/>
</dbReference>
<dbReference type="Pfam" id="PF09902">
    <property type="entry name" value="DUF2129"/>
    <property type="match status" value="1"/>
</dbReference>
<dbReference type="PIRSF" id="PIRSF031653">
    <property type="entry name" value="UCP031653"/>
    <property type="match status" value="1"/>
</dbReference>
<accession>Q8DQI2</accession>
<gene>
    <name type="ordered locus">spr0657</name>
</gene>
<organism>
    <name type="scientific">Streptococcus pneumoniae (strain ATCC BAA-255 / R6)</name>
    <dbReference type="NCBI Taxonomy" id="171101"/>
    <lineage>
        <taxon>Bacteria</taxon>
        <taxon>Bacillati</taxon>
        <taxon>Bacillota</taxon>
        <taxon>Bacilli</taxon>
        <taxon>Lactobacillales</taxon>
        <taxon>Streptococcaceae</taxon>
        <taxon>Streptococcus</taxon>
    </lineage>
</organism>
<keyword id="KW-0963">Cytoplasm</keyword>
<keyword id="KW-1185">Reference proteome</keyword>
<sequence length="82" mass="9941">MFEKVNRSGLIIYLYYNRDAKKLQDYGDITYHSKKHRYLQLYVPTQEVEQLVGRLSKEKFIKKVRVCHIQELETPFVGNLYR</sequence>